<proteinExistence type="inferred from homology"/>
<accession>Q5M3V8</accession>
<protein>
    <recommendedName>
        <fullName evidence="1">Phosphoglucosamine mutase</fullName>
        <ecNumber evidence="1">5.4.2.10</ecNumber>
    </recommendedName>
</protein>
<organism>
    <name type="scientific">Streptococcus thermophilus (strain ATCC BAA-250 / LMG 18311)</name>
    <dbReference type="NCBI Taxonomy" id="264199"/>
    <lineage>
        <taxon>Bacteria</taxon>
        <taxon>Bacillati</taxon>
        <taxon>Bacillota</taxon>
        <taxon>Bacilli</taxon>
        <taxon>Lactobacillales</taxon>
        <taxon>Streptococcaceae</taxon>
        <taxon>Streptococcus</taxon>
    </lineage>
</organism>
<evidence type="ECO:0000255" key="1">
    <source>
        <dbReference type="HAMAP-Rule" id="MF_01554"/>
    </source>
</evidence>
<dbReference type="EC" id="5.4.2.10" evidence="1"/>
<dbReference type="EMBL" id="CP000023">
    <property type="protein sequence ID" value="AAV60885.1"/>
    <property type="molecule type" value="Genomic_DNA"/>
</dbReference>
<dbReference type="RefSeq" id="WP_011226155.1">
    <property type="nucleotide sequence ID" value="NC_006448.1"/>
</dbReference>
<dbReference type="SMR" id="Q5M3V8"/>
<dbReference type="STRING" id="264199.stu1251"/>
<dbReference type="GeneID" id="66899041"/>
<dbReference type="KEGG" id="stl:stu1251"/>
<dbReference type="eggNOG" id="COG1109">
    <property type="taxonomic scope" value="Bacteria"/>
</dbReference>
<dbReference type="HOGENOM" id="CLU_016950_7_0_9"/>
<dbReference type="Proteomes" id="UP000001170">
    <property type="component" value="Chromosome"/>
</dbReference>
<dbReference type="GO" id="GO:0005829">
    <property type="term" value="C:cytosol"/>
    <property type="evidence" value="ECO:0007669"/>
    <property type="project" value="TreeGrafter"/>
</dbReference>
<dbReference type="GO" id="GO:0000287">
    <property type="term" value="F:magnesium ion binding"/>
    <property type="evidence" value="ECO:0007669"/>
    <property type="project" value="UniProtKB-UniRule"/>
</dbReference>
<dbReference type="GO" id="GO:0008966">
    <property type="term" value="F:phosphoglucosamine mutase activity"/>
    <property type="evidence" value="ECO:0007669"/>
    <property type="project" value="UniProtKB-UniRule"/>
</dbReference>
<dbReference type="GO" id="GO:0004615">
    <property type="term" value="F:phosphomannomutase activity"/>
    <property type="evidence" value="ECO:0007669"/>
    <property type="project" value="TreeGrafter"/>
</dbReference>
<dbReference type="GO" id="GO:0005975">
    <property type="term" value="P:carbohydrate metabolic process"/>
    <property type="evidence" value="ECO:0007669"/>
    <property type="project" value="InterPro"/>
</dbReference>
<dbReference type="GO" id="GO:0009252">
    <property type="term" value="P:peptidoglycan biosynthetic process"/>
    <property type="evidence" value="ECO:0007669"/>
    <property type="project" value="TreeGrafter"/>
</dbReference>
<dbReference type="GO" id="GO:0006048">
    <property type="term" value="P:UDP-N-acetylglucosamine biosynthetic process"/>
    <property type="evidence" value="ECO:0007669"/>
    <property type="project" value="TreeGrafter"/>
</dbReference>
<dbReference type="CDD" id="cd05802">
    <property type="entry name" value="GlmM"/>
    <property type="match status" value="1"/>
</dbReference>
<dbReference type="FunFam" id="3.30.310.50:FF:000001">
    <property type="entry name" value="Phosphoglucosamine mutase"/>
    <property type="match status" value="1"/>
</dbReference>
<dbReference type="FunFam" id="3.40.120.10:FF:000001">
    <property type="entry name" value="Phosphoglucosamine mutase"/>
    <property type="match status" value="1"/>
</dbReference>
<dbReference type="FunFam" id="3.40.120.10:FF:000002">
    <property type="entry name" value="Phosphoglucosamine mutase"/>
    <property type="match status" value="1"/>
</dbReference>
<dbReference type="Gene3D" id="3.40.120.10">
    <property type="entry name" value="Alpha-D-Glucose-1,6-Bisphosphate, subunit A, domain 3"/>
    <property type="match status" value="3"/>
</dbReference>
<dbReference type="Gene3D" id="3.30.310.50">
    <property type="entry name" value="Alpha-D-phosphohexomutase, C-terminal domain"/>
    <property type="match status" value="1"/>
</dbReference>
<dbReference type="HAMAP" id="MF_01554_B">
    <property type="entry name" value="GlmM_B"/>
    <property type="match status" value="1"/>
</dbReference>
<dbReference type="InterPro" id="IPR005844">
    <property type="entry name" value="A-D-PHexomutase_a/b/a-I"/>
</dbReference>
<dbReference type="InterPro" id="IPR016055">
    <property type="entry name" value="A-D-PHexomutase_a/b/a-I/II/III"/>
</dbReference>
<dbReference type="InterPro" id="IPR005845">
    <property type="entry name" value="A-D-PHexomutase_a/b/a-II"/>
</dbReference>
<dbReference type="InterPro" id="IPR005846">
    <property type="entry name" value="A-D-PHexomutase_a/b/a-III"/>
</dbReference>
<dbReference type="InterPro" id="IPR005843">
    <property type="entry name" value="A-D-PHexomutase_C"/>
</dbReference>
<dbReference type="InterPro" id="IPR036900">
    <property type="entry name" value="A-D-PHexomutase_C_sf"/>
</dbReference>
<dbReference type="InterPro" id="IPR016066">
    <property type="entry name" value="A-D-PHexomutase_CS"/>
</dbReference>
<dbReference type="InterPro" id="IPR005841">
    <property type="entry name" value="Alpha-D-phosphohexomutase_SF"/>
</dbReference>
<dbReference type="InterPro" id="IPR006352">
    <property type="entry name" value="GlmM_bact"/>
</dbReference>
<dbReference type="InterPro" id="IPR050060">
    <property type="entry name" value="Phosphoglucosamine_mutase"/>
</dbReference>
<dbReference type="NCBIfam" id="TIGR01455">
    <property type="entry name" value="glmM"/>
    <property type="match status" value="1"/>
</dbReference>
<dbReference type="PANTHER" id="PTHR42946:SF1">
    <property type="entry name" value="PHOSPHOGLUCOMUTASE (ALPHA-D-GLUCOSE-1,6-BISPHOSPHATE-DEPENDENT)"/>
    <property type="match status" value="1"/>
</dbReference>
<dbReference type="PANTHER" id="PTHR42946">
    <property type="entry name" value="PHOSPHOHEXOSE MUTASE"/>
    <property type="match status" value="1"/>
</dbReference>
<dbReference type="Pfam" id="PF02878">
    <property type="entry name" value="PGM_PMM_I"/>
    <property type="match status" value="1"/>
</dbReference>
<dbReference type="Pfam" id="PF02879">
    <property type="entry name" value="PGM_PMM_II"/>
    <property type="match status" value="1"/>
</dbReference>
<dbReference type="Pfam" id="PF02880">
    <property type="entry name" value="PGM_PMM_III"/>
    <property type="match status" value="1"/>
</dbReference>
<dbReference type="Pfam" id="PF00408">
    <property type="entry name" value="PGM_PMM_IV"/>
    <property type="match status" value="1"/>
</dbReference>
<dbReference type="PRINTS" id="PR00509">
    <property type="entry name" value="PGMPMM"/>
</dbReference>
<dbReference type="SUPFAM" id="SSF55957">
    <property type="entry name" value="Phosphoglucomutase, C-terminal domain"/>
    <property type="match status" value="1"/>
</dbReference>
<dbReference type="SUPFAM" id="SSF53738">
    <property type="entry name" value="Phosphoglucomutase, first 3 domains"/>
    <property type="match status" value="3"/>
</dbReference>
<dbReference type="PROSITE" id="PS00710">
    <property type="entry name" value="PGM_PMM"/>
    <property type="match status" value="1"/>
</dbReference>
<name>GLMM_STRT2</name>
<gene>
    <name evidence="1" type="primary">glmM</name>
    <name type="ordered locus">stu1251</name>
</gene>
<keyword id="KW-0413">Isomerase</keyword>
<keyword id="KW-0460">Magnesium</keyword>
<keyword id="KW-0479">Metal-binding</keyword>
<keyword id="KW-0597">Phosphoprotein</keyword>
<keyword id="KW-1185">Reference proteome</keyword>
<comment type="function">
    <text evidence="1">Catalyzes the conversion of glucosamine-6-phosphate to glucosamine-1-phosphate.</text>
</comment>
<comment type="catalytic activity">
    <reaction evidence="1">
        <text>alpha-D-glucosamine 1-phosphate = D-glucosamine 6-phosphate</text>
        <dbReference type="Rhea" id="RHEA:23424"/>
        <dbReference type="ChEBI" id="CHEBI:58516"/>
        <dbReference type="ChEBI" id="CHEBI:58725"/>
        <dbReference type="EC" id="5.4.2.10"/>
    </reaction>
</comment>
<comment type="cofactor">
    <cofactor evidence="1">
        <name>Mg(2+)</name>
        <dbReference type="ChEBI" id="CHEBI:18420"/>
    </cofactor>
    <text evidence="1">Binds 1 Mg(2+) ion per subunit.</text>
</comment>
<comment type="PTM">
    <text evidence="1">Activated by phosphorylation.</text>
</comment>
<comment type="similarity">
    <text evidence="1">Belongs to the phosphohexose mutase family.</text>
</comment>
<feature type="chain" id="PRO_0000147980" description="Phosphoglucosamine mutase">
    <location>
        <begin position="1"/>
        <end position="450"/>
    </location>
</feature>
<feature type="active site" description="Phosphoserine intermediate" evidence="1">
    <location>
        <position position="101"/>
    </location>
</feature>
<feature type="binding site" description="via phosphate group" evidence="1">
    <location>
        <position position="101"/>
    </location>
    <ligand>
        <name>Mg(2+)</name>
        <dbReference type="ChEBI" id="CHEBI:18420"/>
    </ligand>
</feature>
<feature type="binding site" evidence="1">
    <location>
        <position position="240"/>
    </location>
    <ligand>
        <name>Mg(2+)</name>
        <dbReference type="ChEBI" id="CHEBI:18420"/>
    </ligand>
</feature>
<feature type="binding site" evidence="1">
    <location>
        <position position="242"/>
    </location>
    <ligand>
        <name>Mg(2+)</name>
        <dbReference type="ChEBI" id="CHEBI:18420"/>
    </ligand>
</feature>
<feature type="binding site" evidence="1">
    <location>
        <position position="244"/>
    </location>
    <ligand>
        <name>Mg(2+)</name>
        <dbReference type="ChEBI" id="CHEBI:18420"/>
    </ligand>
</feature>
<feature type="modified residue" description="Phosphoserine" evidence="1">
    <location>
        <position position="101"/>
    </location>
</feature>
<sequence>MGKYFGTDGVRGEANVELTPELAFKLGRFGGYVLSQHETGRPKVFVARDTRISGEMLESALVAGLLSVGIEVYKLGVLATPGVSYLVRTENASAGVMISASHNPALDNGIKFFGGDGFKLDDAREAEIEALLDAAEDTLPRPSAEGLGTLVDYPEGLRKYEKFLVTTGLDLGGMKVALDAANGAAAVSARNIFLDLNAEIAVIGDQPDGLNINAGVGSTHPEQLQALVRESGSAIGLAFDGDSDRLIAVDENGDIVDGDKVMYIIGKYLSQKGELAKNTIVTTVMSNLGFHKALDREGINKAVTAVGDRYVVEEMRKNGYNLGGEQSGHVIIMDYNTTGDGQLTAIQLTKVMVETGKSLSELAAEVTIYPQKLVNIRVENSMKDKAMDVPAIAAIIEKMEAEMAGNGRILVRPSGTEPLLRVMAEAPTDDEVNYYVDTIADVVRAEIGLD</sequence>
<reference key="1">
    <citation type="journal article" date="2004" name="Nat. Biotechnol.">
        <title>Complete sequence and comparative genome analysis of the dairy bacterium Streptococcus thermophilus.</title>
        <authorList>
            <person name="Bolotin A."/>
            <person name="Quinquis B."/>
            <person name="Renault P."/>
            <person name="Sorokin A."/>
            <person name="Ehrlich S.D."/>
            <person name="Kulakauskas S."/>
            <person name="Lapidus A."/>
            <person name="Goltsman E."/>
            <person name="Mazur M."/>
            <person name="Pusch G.D."/>
            <person name="Fonstein M."/>
            <person name="Overbeek R."/>
            <person name="Kyprides N."/>
            <person name="Purnelle B."/>
            <person name="Prozzi D."/>
            <person name="Ngui K."/>
            <person name="Masuy D."/>
            <person name="Hancy F."/>
            <person name="Burteau S."/>
            <person name="Boutry M."/>
            <person name="Delcour J."/>
            <person name="Goffeau A."/>
            <person name="Hols P."/>
        </authorList>
    </citation>
    <scope>NUCLEOTIDE SEQUENCE [LARGE SCALE GENOMIC DNA]</scope>
    <source>
        <strain>ATCC BAA-250 / LMG 18311</strain>
    </source>
</reference>